<sequence>MKYPLVPLVNELTFSFLASWLCLPVGLLLFLLIVWLRFLLSQDSEENDSDLCFDWEPWSKGPAEFCQEETLHSPEEERPCW</sequence>
<organism>
    <name type="scientific">Sus scrofa</name>
    <name type="common">Pig</name>
    <dbReference type="NCBI Taxonomy" id="9823"/>
    <lineage>
        <taxon>Eukaryota</taxon>
        <taxon>Metazoa</taxon>
        <taxon>Chordata</taxon>
        <taxon>Craniata</taxon>
        <taxon>Vertebrata</taxon>
        <taxon>Euteleostomi</taxon>
        <taxon>Mammalia</taxon>
        <taxon>Eutheria</taxon>
        <taxon>Laurasiatheria</taxon>
        <taxon>Artiodactyla</taxon>
        <taxon>Suina</taxon>
        <taxon>Suidae</taxon>
        <taxon>Sus</taxon>
    </lineage>
</organism>
<gene>
    <name evidence="2" type="primary">ADIG</name>
    <name evidence="6" type="synonym">SMAF1</name>
</gene>
<proteinExistence type="inferred from homology"/>
<accession>Q30C86</accession>
<comment type="function">
    <text evidence="3">Plays a role in stimulating adipocyte differentiation and development.</text>
</comment>
<comment type="subcellular location">
    <subcellularLocation>
        <location evidence="4">Membrane</location>
        <topology evidence="4">Single-pass membrane protein</topology>
    </subcellularLocation>
    <subcellularLocation>
        <location evidence="1">Nucleus</location>
    </subcellularLocation>
</comment>
<comment type="similarity">
    <text evidence="5">Belongs to the adipogenin family.</text>
</comment>
<feature type="chain" id="PRO_0000296377" description="Adipogenin">
    <location>
        <begin position="1"/>
        <end position="81"/>
    </location>
</feature>
<feature type="transmembrane region" description="Helical" evidence="4">
    <location>
        <begin position="16"/>
        <end position="36"/>
    </location>
</feature>
<name>ADIG_PIG</name>
<evidence type="ECO:0000250" key="1"/>
<evidence type="ECO:0000250" key="2">
    <source>
        <dbReference type="UniProtKB" id="Q0VDE8"/>
    </source>
</evidence>
<evidence type="ECO:0000250" key="3">
    <source>
        <dbReference type="UniProtKB" id="Q8R400"/>
    </source>
</evidence>
<evidence type="ECO:0000255" key="4"/>
<evidence type="ECO:0000305" key="5"/>
<evidence type="ECO:0000312" key="6">
    <source>
        <dbReference type="EMBL" id="ABA77533.1"/>
    </source>
</evidence>
<protein>
    <recommendedName>
        <fullName>Adipogenin</fullName>
    </recommendedName>
    <alternativeName>
        <fullName>Small adipocyte factor 1</fullName>
        <shortName>SMAF-1</shortName>
    </alternativeName>
</protein>
<reference evidence="6" key="1">
    <citation type="submission" date="2005-09" db="EMBL/GenBank/DDBJ databases">
        <title>Molecular cloning, expression and radiation hybrid mapping of the porcine SMAF1 gene.</title>
        <authorList>
            <person name="Yang W.H."/>
            <person name="Jiang S.W."/>
        </authorList>
    </citation>
    <scope>NUCLEOTIDE SEQUENCE [MRNA]</scope>
</reference>
<dbReference type="EMBL" id="DQ191892">
    <property type="protein sequence ID" value="ABA77533.1"/>
    <property type="molecule type" value="mRNA"/>
</dbReference>
<dbReference type="RefSeq" id="NP_001032353.1">
    <property type="nucleotide sequence ID" value="NM_001037276.2"/>
</dbReference>
<dbReference type="RefSeq" id="NP_001422155.1">
    <property type="nucleotide sequence ID" value="NM_001435226.1"/>
</dbReference>
<dbReference type="RefSeq" id="XP_005672992.1">
    <property type="nucleotide sequence ID" value="XM_005672935.2"/>
</dbReference>
<dbReference type="RefSeq" id="XP_013840823.1">
    <property type="nucleotide sequence ID" value="XM_013985369.1"/>
</dbReference>
<dbReference type="RefSeq" id="XP_013840824.1">
    <property type="nucleotide sequence ID" value="XM_013985370.2"/>
</dbReference>
<dbReference type="RefSeq" id="XP_013840825.1">
    <property type="nucleotide sequence ID" value="XM_013985371.1"/>
</dbReference>
<dbReference type="SMR" id="Q30C86"/>
<dbReference type="FunCoup" id="Q30C86">
    <property type="interactions" value="132"/>
</dbReference>
<dbReference type="STRING" id="9823.ENSSSCP00000007824"/>
<dbReference type="PaxDb" id="9823-ENSSSCP00000007824"/>
<dbReference type="Ensembl" id="ENSSSCT00000008038.5">
    <property type="protein sequence ID" value="ENSSSCP00000007824.2"/>
    <property type="gene ID" value="ENSSSCG00000007346.5"/>
</dbReference>
<dbReference type="Ensembl" id="ENSSSCT00025031807.1">
    <property type="protein sequence ID" value="ENSSSCP00025013317.1"/>
    <property type="gene ID" value="ENSSSCG00025023475.1"/>
</dbReference>
<dbReference type="Ensembl" id="ENSSSCT00030018123.1">
    <property type="protein sequence ID" value="ENSSSCP00030008044.1"/>
    <property type="gene ID" value="ENSSSCG00030013212.1"/>
</dbReference>
<dbReference type="Ensembl" id="ENSSSCT00035078962.1">
    <property type="protein sequence ID" value="ENSSSCP00035032400.1"/>
    <property type="gene ID" value="ENSSSCG00035058971.1"/>
</dbReference>
<dbReference type="Ensembl" id="ENSSSCT00040055870.1">
    <property type="protein sequence ID" value="ENSSSCP00040023215.1"/>
    <property type="gene ID" value="ENSSSCG00040041758.1"/>
</dbReference>
<dbReference type="Ensembl" id="ENSSSCT00045029318.1">
    <property type="protein sequence ID" value="ENSSSCP00045020313.1"/>
    <property type="gene ID" value="ENSSSCG00045017232.1"/>
</dbReference>
<dbReference type="Ensembl" id="ENSSSCT00050022931.1">
    <property type="protein sequence ID" value="ENSSSCP00050009717.1"/>
    <property type="gene ID" value="ENSSSCG00050016806.1"/>
</dbReference>
<dbReference type="Ensembl" id="ENSSSCT00055058347.1">
    <property type="protein sequence ID" value="ENSSSCP00055046687.1"/>
    <property type="gene ID" value="ENSSSCG00055029390.1"/>
</dbReference>
<dbReference type="Ensembl" id="ENSSSCT00060086767.1">
    <property type="protein sequence ID" value="ENSSSCP00060037531.1"/>
    <property type="gene ID" value="ENSSSCG00060063600.1"/>
</dbReference>
<dbReference type="Ensembl" id="ENSSSCT00065019646.1">
    <property type="protein sequence ID" value="ENSSSCP00065008027.1"/>
    <property type="gene ID" value="ENSSSCG00065014770.1"/>
</dbReference>
<dbReference type="Ensembl" id="ENSSSCT00070010110.1">
    <property type="protein sequence ID" value="ENSSSCP00070008301.1"/>
    <property type="gene ID" value="ENSSSCG00070005331.1"/>
</dbReference>
<dbReference type="Ensembl" id="ENSSSCT00070020874.1">
    <property type="protein sequence ID" value="ENSSSCP00070017262.1"/>
    <property type="gene ID" value="ENSSSCG00070010764.1"/>
</dbReference>
<dbReference type="Ensembl" id="ENSSSCT00115015068">
    <property type="protein sequence ID" value="ENSSSCP00115014234"/>
    <property type="gene ID" value="ENSSSCG00115008636"/>
</dbReference>
<dbReference type="GeneID" id="641357"/>
<dbReference type="KEGG" id="ssc:641357"/>
<dbReference type="CTD" id="149685"/>
<dbReference type="VGNC" id="VGNC:96182">
    <property type="gene designation" value="ADIG"/>
</dbReference>
<dbReference type="eggNOG" id="ENOG502SXJP">
    <property type="taxonomic scope" value="Eukaryota"/>
</dbReference>
<dbReference type="GeneTree" id="ENSGT00390000018723"/>
<dbReference type="HOGENOM" id="CLU_2605436_0_0_1"/>
<dbReference type="InParanoid" id="Q30C86"/>
<dbReference type="OMA" id="QGPAEFC"/>
<dbReference type="OrthoDB" id="9426851at2759"/>
<dbReference type="Proteomes" id="UP000008227">
    <property type="component" value="Chromosome 17"/>
</dbReference>
<dbReference type="Proteomes" id="UP000314985">
    <property type="component" value="Chromosome 17"/>
</dbReference>
<dbReference type="Proteomes" id="UP000314985">
    <property type="component" value="Unassembled WGS sequence"/>
</dbReference>
<dbReference type="Proteomes" id="UP000694570">
    <property type="component" value="Unplaced"/>
</dbReference>
<dbReference type="Proteomes" id="UP000694571">
    <property type="component" value="Unplaced"/>
</dbReference>
<dbReference type="Proteomes" id="UP000694720">
    <property type="component" value="Unplaced"/>
</dbReference>
<dbReference type="Proteomes" id="UP000694722">
    <property type="component" value="Unplaced"/>
</dbReference>
<dbReference type="Proteomes" id="UP000694723">
    <property type="component" value="Unplaced"/>
</dbReference>
<dbReference type="Proteomes" id="UP000694724">
    <property type="component" value="Unplaced"/>
</dbReference>
<dbReference type="Proteomes" id="UP000694725">
    <property type="component" value="Unplaced"/>
</dbReference>
<dbReference type="Proteomes" id="UP000694726">
    <property type="component" value="Unplaced"/>
</dbReference>
<dbReference type="Proteomes" id="UP000694727">
    <property type="component" value="Unplaced"/>
</dbReference>
<dbReference type="Proteomes" id="UP000694728">
    <property type="component" value="Unplaced"/>
</dbReference>
<dbReference type="Bgee" id="ENSSSCG00000007346">
    <property type="expression patterns" value="Expressed in subcutaneous adipose tissue and 29 other cell types or tissues"/>
</dbReference>
<dbReference type="GO" id="GO:0005737">
    <property type="term" value="C:cytoplasm"/>
    <property type="evidence" value="ECO:0000250"/>
    <property type="project" value="HGNC-UCL"/>
</dbReference>
<dbReference type="GO" id="GO:0005811">
    <property type="term" value="C:lipid droplet"/>
    <property type="evidence" value="ECO:0000318"/>
    <property type="project" value="GO_Central"/>
</dbReference>
<dbReference type="GO" id="GO:0016020">
    <property type="term" value="C:membrane"/>
    <property type="evidence" value="ECO:0007669"/>
    <property type="project" value="UniProtKB-SubCell"/>
</dbReference>
<dbReference type="GO" id="GO:0005634">
    <property type="term" value="C:nucleus"/>
    <property type="evidence" value="ECO:0000250"/>
    <property type="project" value="HGNC-UCL"/>
</dbReference>
<dbReference type="GO" id="GO:0050873">
    <property type="term" value="P:brown fat cell differentiation"/>
    <property type="evidence" value="ECO:0000250"/>
    <property type="project" value="HGNC-UCL"/>
</dbReference>
<dbReference type="GO" id="GO:0045600">
    <property type="term" value="P:positive regulation of fat cell differentiation"/>
    <property type="evidence" value="ECO:0000250"/>
    <property type="project" value="HGNC-UCL"/>
</dbReference>
<dbReference type="GO" id="GO:0007283">
    <property type="term" value="P:spermatogenesis"/>
    <property type="evidence" value="ECO:0007669"/>
    <property type="project" value="Ensembl"/>
</dbReference>
<dbReference type="GO" id="GO:0050872">
    <property type="term" value="P:white fat cell differentiation"/>
    <property type="evidence" value="ECO:0000318"/>
    <property type="project" value="GO_Central"/>
</dbReference>
<dbReference type="InterPro" id="IPR027938">
    <property type="entry name" value="Adipogenin"/>
</dbReference>
<dbReference type="PANTHER" id="PTHR38499">
    <property type="entry name" value="ADIPOGENIN"/>
    <property type="match status" value="1"/>
</dbReference>
<dbReference type="PANTHER" id="PTHR38499:SF1">
    <property type="entry name" value="ADIPOGENIN"/>
    <property type="match status" value="1"/>
</dbReference>
<dbReference type="Pfam" id="PF15202">
    <property type="entry name" value="Adipogenin"/>
    <property type="match status" value="1"/>
</dbReference>
<keyword id="KW-0472">Membrane</keyword>
<keyword id="KW-0539">Nucleus</keyword>
<keyword id="KW-1185">Reference proteome</keyword>
<keyword id="KW-0812">Transmembrane</keyword>
<keyword id="KW-1133">Transmembrane helix</keyword>